<dbReference type="EC" id="2.7.11.1"/>
<dbReference type="EMBL" id="AF491997">
    <property type="protein sequence ID" value="AAM76684.1"/>
    <property type="molecule type" value="mRNA"/>
</dbReference>
<dbReference type="EMBL" id="AJ418375">
    <property type="protein sequence ID" value="CAD10812.1"/>
    <property type="status" value="ALT_INIT"/>
    <property type="molecule type" value="mRNA"/>
</dbReference>
<dbReference type="EMBL" id="AJ418367">
    <property type="protein sequence ID" value="CAD10806.1"/>
    <property type="status" value="ALT_INIT"/>
    <property type="molecule type" value="mRNA"/>
</dbReference>
<dbReference type="EMBL" id="AJ418376">
    <property type="protein sequence ID" value="CAD10813.1"/>
    <property type="status" value="ALT_INIT"/>
    <property type="molecule type" value="mRNA"/>
</dbReference>
<dbReference type="SMR" id="Q8LKZ1"/>
<dbReference type="OrthoDB" id="4062651at2759"/>
<dbReference type="GO" id="GO:0016020">
    <property type="term" value="C:membrane"/>
    <property type="evidence" value="ECO:0007669"/>
    <property type="project" value="UniProtKB-SubCell"/>
</dbReference>
<dbReference type="GO" id="GO:0005524">
    <property type="term" value="F:ATP binding"/>
    <property type="evidence" value="ECO:0007669"/>
    <property type="project" value="UniProtKB-KW"/>
</dbReference>
<dbReference type="GO" id="GO:0106310">
    <property type="term" value="F:protein serine kinase activity"/>
    <property type="evidence" value="ECO:0007669"/>
    <property type="project" value="RHEA"/>
</dbReference>
<dbReference type="GO" id="GO:0004674">
    <property type="term" value="F:protein serine/threonine kinase activity"/>
    <property type="evidence" value="ECO:0007669"/>
    <property type="project" value="UniProtKB-KW"/>
</dbReference>
<dbReference type="GO" id="GO:0009877">
    <property type="term" value="P:nodulation"/>
    <property type="evidence" value="ECO:0007669"/>
    <property type="project" value="UniProtKB-KW"/>
</dbReference>
<dbReference type="CDD" id="cd14066">
    <property type="entry name" value="STKc_IRAK"/>
    <property type="match status" value="1"/>
</dbReference>
<dbReference type="FunFam" id="1.10.510.10:FF:000300">
    <property type="entry name" value="Calmodulin-binding receptor-like cytoplasmic kinase 3"/>
    <property type="match status" value="1"/>
</dbReference>
<dbReference type="FunFam" id="3.80.10.10:FF:000129">
    <property type="entry name" value="Leucine-rich repeat receptor-like kinase"/>
    <property type="match status" value="1"/>
</dbReference>
<dbReference type="FunFam" id="3.30.200.20:FF:000495">
    <property type="entry name" value="Nodulation receptor kinase"/>
    <property type="match status" value="1"/>
</dbReference>
<dbReference type="Gene3D" id="2.60.120.430">
    <property type="entry name" value="Galactose-binding lectin"/>
    <property type="match status" value="1"/>
</dbReference>
<dbReference type="Gene3D" id="3.30.200.20">
    <property type="entry name" value="Phosphorylase Kinase, domain 1"/>
    <property type="match status" value="1"/>
</dbReference>
<dbReference type="Gene3D" id="3.80.10.10">
    <property type="entry name" value="Ribonuclease Inhibitor"/>
    <property type="match status" value="1"/>
</dbReference>
<dbReference type="Gene3D" id="1.10.510.10">
    <property type="entry name" value="Transferase(Phosphotransferase) domain 1"/>
    <property type="match status" value="1"/>
</dbReference>
<dbReference type="InterPro" id="IPR011009">
    <property type="entry name" value="Kinase-like_dom_sf"/>
</dbReference>
<dbReference type="InterPro" id="IPR001611">
    <property type="entry name" value="Leu-rich_rpt"/>
</dbReference>
<dbReference type="InterPro" id="IPR032675">
    <property type="entry name" value="LRR_dom_sf"/>
</dbReference>
<dbReference type="InterPro" id="IPR013210">
    <property type="entry name" value="LRR_N_plant-typ"/>
</dbReference>
<dbReference type="InterPro" id="IPR024788">
    <property type="entry name" value="Malectin-like_Carb-bd_dom"/>
</dbReference>
<dbReference type="InterPro" id="IPR000719">
    <property type="entry name" value="Prot_kinase_dom"/>
</dbReference>
<dbReference type="InterPro" id="IPR017441">
    <property type="entry name" value="Protein_kinase_ATP_BS"/>
</dbReference>
<dbReference type="InterPro" id="IPR001245">
    <property type="entry name" value="Ser-Thr/Tyr_kinase_cat_dom"/>
</dbReference>
<dbReference type="InterPro" id="IPR008271">
    <property type="entry name" value="Ser/Thr_kinase_AS"/>
</dbReference>
<dbReference type="PANTHER" id="PTHR45631">
    <property type="entry name" value="OS07G0107800 PROTEIN-RELATED"/>
    <property type="match status" value="1"/>
</dbReference>
<dbReference type="PANTHER" id="PTHR45631:SF27">
    <property type="entry name" value="PROTEIN KINASE DOMAIN-CONTAINING PROTEIN"/>
    <property type="match status" value="1"/>
</dbReference>
<dbReference type="Pfam" id="PF00560">
    <property type="entry name" value="LRR_1"/>
    <property type="match status" value="2"/>
</dbReference>
<dbReference type="Pfam" id="PF08263">
    <property type="entry name" value="LRRNT_2"/>
    <property type="match status" value="1"/>
</dbReference>
<dbReference type="Pfam" id="PF12819">
    <property type="entry name" value="Malectin_like"/>
    <property type="match status" value="1"/>
</dbReference>
<dbReference type="Pfam" id="PF07714">
    <property type="entry name" value="PK_Tyr_Ser-Thr"/>
    <property type="match status" value="1"/>
</dbReference>
<dbReference type="SMART" id="SM00220">
    <property type="entry name" value="S_TKc"/>
    <property type="match status" value="1"/>
</dbReference>
<dbReference type="SUPFAM" id="SSF52058">
    <property type="entry name" value="L domain-like"/>
    <property type="match status" value="1"/>
</dbReference>
<dbReference type="SUPFAM" id="SSF56112">
    <property type="entry name" value="Protein kinase-like (PK-like)"/>
    <property type="match status" value="1"/>
</dbReference>
<dbReference type="PROSITE" id="PS00107">
    <property type="entry name" value="PROTEIN_KINASE_ATP"/>
    <property type="match status" value="1"/>
</dbReference>
<dbReference type="PROSITE" id="PS50011">
    <property type="entry name" value="PROTEIN_KINASE_DOM"/>
    <property type="match status" value="1"/>
</dbReference>
<dbReference type="PROSITE" id="PS00108">
    <property type="entry name" value="PROTEIN_KINASE_ST"/>
    <property type="match status" value="1"/>
</dbReference>
<accession>Q8LKZ1</accession>
<accession>Q8L6F1</accession>
<accession>Q8L6F2</accession>
<accession>Q8L6F3</accession>
<organism>
    <name type="scientific">Pisum sativum</name>
    <name type="common">Garden pea</name>
    <name type="synonym">Lathyrus oleraceus</name>
    <dbReference type="NCBI Taxonomy" id="3888"/>
    <lineage>
        <taxon>Eukaryota</taxon>
        <taxon>Viridiplantae</taxon>
        <taxon>Streptophyta</taxon>
        <taxon>Embryophyta</taxon>
        <taxon>Tracheophyta</taxon>
        <taxon>Spermatophyta</taxon>
        <taxon>Magnoliopsida</taxon>
        <taxon>eudicotyledons</taxon>
        <taxon>Gunneridae</taxon>
        <taxon>Pentapetalae</taxon>
        <taxon>rosids</taxon>
        <taxon>fabids</taxon>
        <taxon>Fabales</taxon>
        <taxon>Fabaceae</taxon>
        <taxon>Papilionoideae</taxon>
        <taxon>50 kb inversion clade</taxon>
        <taxon>NPAAA clade</taxon>
        <taxon>Hologalegina</taxon>
        <taxon>IRL clade</taxon>
        <taxon>Fabeae</taxon>
        <taxon>Pisum</taxon>
    </lineage>
</organism>
<protein>
    <recommendedName>
        <fullName>Nodulation receptor kinase</fullName>
        <ecNumber>2.7.11.1</ecNumber>
    </recommendedName>
</protein>
<proteinExistence type="evidence at protein level"/>
<keyword id="KW-0067">ATP-binding</keyword>
<keyword id="KW-0175">Coiled coil</keyword>
<keyword id="KW-0418">Kinase</keyword>
<keyword id="KW-0433">Leucine-rich repeat</keyword>
<keyword id="KW-0472">Membrane</keyword>
<keyword id="KW-0536">Nodulation</keyword>
<keyword id="KW-0547">Nucleotide-binding</keyword>
<keyword id="KW-0677">Repeat</keyword>
<keyword id="KW-0723">Serine/threonine-protein kinase</keyword>
<keyword id="KW-0732">Signal</keyword>
<keyword id="KW-0808">Transferase</keyword>
<keyword id="KW-0812">Transmembrane</keyword>
<keyword id="KW-1133">Transmembrane helix</keyword>
<evidence type="ECO:0000250" key="1"/>
<evidence type="ECO:0000255" key="2"/>
<evidence type="ECO:0000255" key="3">
    <source>
        <dbReference type="PROSITE-ProRule" id="PRU00159"/>
    </source>
</evidence>
<evidence type="ECO:0000255" key="4">
    <source>
        <dbReference type="PROSITE-ProRule" id="PRU10027"/>
    </source>
</evidence>
<evidence type="ECO:0000269" key="5">
    <source>
    </source>
</evidence>
<evidence type="ECO:0000269" key="6">
    <source>
    </source>
</evidence>
<evidence type="ECO:0000305" key="7"/>
<gene>
    <name type="primary">NORK</name>
    <name type="synonym">SYM19</name>
</gene>
<feature type="signal peptide" evidence="2">
    <location>
        <begin position="1"/>
        <end position="29"/>
    </location>
</feature>
<feature type="chain" id="PRO_0000024365" description="Nodulation receptor kinase">
    <location>
        <begin position="30"/>
        <end position="924"/>
    </location>
</feature>
<feature type="transmembrane region" description="Helical" evidence="2">
    <location>
        <begin position="520"/>
        <end position="540"/>
    </location>
</feature>
<feature type="repeat" description="LRR 1">
    <location>
        <begin position="406"/>
        <end position="428"/>
    </location>
</feature>
<feature type="repeat" description="LRR 2">
    <location>
        <begin position="430"/>
        <end position="452"/>
    </location>
</feature>
<feature type="repeat" description="LRR 3">
    <location>
        <begin position="453"/>
        <end position="475"/>
    </location>
</feature>
<feature type="repeat" description="LRR 4">
    <location>
        <begin position="477"/>
        <end position="498"/>
    </location>
</feature>
<feature type="domain" description="Protein kinase" evidence="3">
    <location>
        <begin position="595"/>
        <end position="872"/>
    </location>
</feature>
<feature type="coiled-coil region" evidence="2">
    <location>
        <begin position="361"/>
        <end position="382"/>
    </location>
</feature>
<feature type="active site" description="Proton acceptor" evidence="3 4">
    <location>
        <position position="721"/>
    </location>
</feature>
<feature type="binding site" evidence="3">
    <location>
        <begin position="601"/>
        <end position="609"/>
    </location>
    <ligand>
        <name>ATP</name>
        <dbReference type="ChEBI" id="CHEBI:30616"/>
    </ligand>
</feature>
<feature type="binding site" evidence="3">
    <location>
        <position position="623"/>
    </location>
    <ligand>
        <name>ATP</name>
        <dbReference type="ChEBI" id="CHEBI:30616"/>
    </ligand>
</feature>
<feature type="mutagenesis site" description="In P4; loss of nodulation and mycorrhizal infection." evidence="6">
    <original>G</original>
    <variation>E</variation>
    <location>
        <position position="604"/>
    </location>
</feature>
<feature type="mutagenesis site" description="In P55/F4-141; loss of nodulation and mycorrhizal infection." evidence="6">
    <original>D</original>
    <variation>N</variation>
    <location>
        <position position="739"/>
    </location>
</feature>
<name>NORK_PEA</name>
<reference key="1">
    <citation type="journal article" date="2002" name="Nature">
        <title>A plant receptor-like kinase required for both bacterial and fungal symbiosis.</title>
        <authorList>
            <person name="Stracke S."/>
            <person name="Kistner C."/>
            <person name="Yoshida S."/>
            <person name="Mulder L."/>
            <person name="Sato S."/>
            <person name="Kaneko T."/>
            <person name="Tabata S."/>
            <person name="Sandal N."/>
            <person name="Stougaard J."/>
            <person name="Szczyglowski K."/>
            <person name="Parniske M."/>
        </authorList>
    </citation>
    <scope>NUCLEOTIDE SEQUENCE [MRNA]</scope>
    <source>
        <strain>cv. Frisson</strain>
    </source>
</reference>
<reference key="2">
    <citation type="journal article" date="2002" name="Nature">
        <title>A receptor kinase gene regulating symbiotic nodule development.</title>
        <authorList>
            <person name="Endre G."/>
            <person name="Kereszt A.A."/>
            <person name="Kevei Z."/>
            <person name="Mihacea S."/>
            <person name="Kalo P."/>
            <person name="Kiss G.B."/>
        </authorList>
    </citation>
    <scope>NUCLEOTIDE SEQUENCE [MRNA]</scope>
    <scope>MUTAGENESIS OF GLY-604 AND ASP-739</scope>
    <source>
        <strain>cv. Frisson</strain>
    </source>
</reference>
<reference key="3">
    <citation type="journal article" date="2000" name="Proc. Natl. Acad. Sci. U.S.A.">
        <title>Dissection of nodulation signaling using pea mutants defective for calcium spiking induced by nod factors and chitin oligomers.</title>
        <authorList>
            <person name="Walker S.A."/>
            <person name="Viprey V."/>
            <person name="Downie J.A."/>
        </authorList>
    </citation>
    <scope>FUNCTION</scope>
</reference>
<sequence length="924" mass="103732">MMELRVICIIRLVVACVLCLCIFIRSASSATEGFESIACCADSNYTDPKTNLNYTTDYRWYSDKSNCRQIPEILLSHRSNINFRLFDIDEGKRCYNLPTIKDQVYLIRGTFPFDSVNTSFYVSIGATELGEVTSSRLEDLEIEGVFRAPKDNIDFCLLKEDVNPFISQLELRPLPEEYLHDFSTNVLKLISRNNLCGIEDDIRFPVDQNDRIWKATSTPSYALPLSFNVSNVELNGKVTPPLQVLQTALTHPERLEFVHVGLETDDYEYSVLLYFLELNDTLKAGQRVFDIYLNSEIKKEGFDVLEGGSKYSYTVLNISANGSLNITLVKASGSKFGPLLNAYEILQARPWIDETDQTDLEVIQKMRKELLLQNQDNEALESWSGDPCMLFPWKGVACDGSNGSSVITKLDLSSSNLKGTIPSSVTEMTKLQILNLSHNHFDGYIPSFPPSSLLISVDLSYNDLTGQLPESIISLPHLNSLYFGCNQHMRDDDEAKLNSSLINTDYGRCNAKKPKFGQVFMIGAITSGSILITLAVVILFFCRYRHKSITLEGFGGKTYPMATNIIFSLPSKDDFFIKSVSVKPFTLEYIELATEKYKTLIGEGGFGSVYRGTLDDGQEVAVKVRSATSTQGTREFDNELNLLSAIQHENLVPLLGYCNEYDQQILVYPFMSNGSLLDRLYGEPAKRKILDWPTRLSIALGAARGLAYLHTFPGRSVIHRDVKSSNILLDHSMCAKVADFGFSKYAPQEGDSYVSLEVRGTAGYLDPEYYKTQQLSEKSDVFSFGVVLLEIVSGREPLNIKRPRVEWSLVEWAKPYIRASKVDEIVDPGIKGGYHAEALWRVVEVALQCLEPYSTYRPCMVDIVRELEDALIIENNASEYMKSIDSLGGSNRYSIVMDKRALPSTTSTAESTITTQNVSHPQPR</sequence>
<comment type="function">
    <text evidence="5">Involved in the perception of symbiotic fungi and bacteria and required for the calcium spiking. Part of the perception/transduction system leading to nodulation or mycorrhizal infection.</text>
</comment>
<comment type="catalytic activity">
    <reaction>
        <text>L-seryl-[protein] + ATP = O-phospho-L-seryl-[protein] + ADP + H(+)</text>
        <dbReference type="Rhea" id="RHEA:17989"/>
        <dbReference type="Rhea" id="RHEA-COMP:9863"/>
        <dbReference type="Rhea" id="RHEA-COMP:11604"/>
        <dbReference type="ChEBI" id="CHEBI:15378"/>
        <dbReference type="ChEBI" id="CHEBI:29999"/>
        <dbReference type="ChEBI" id="CHEBI:30616"/>
        <dbReference type="ChEBI" id="CHEBI:83421"/>
        <dbReference type="ChEBI" id="CHEBI:456216"/>
        <dbReference type="EC" id="2.7.11.1"/>
    </reaction>
</comment>
<comment type="catalytic activity">
    <reaction>
        <text>L-threonyl-[protein] + ATP = O-phospho-L-threonyl-[protein] + ADP + H(+)</text>
        <dbReference type="Rhea" id="RHEA:46608"/>
        <dbReference type="Rhea" id="RHEA-COMP:11060"/>
        <dbReference type="Rhea" id="RHEA-COMP:11605"/>
        <dbReference type="ChEBI" id="CHEBI:15378"/>
        <dbReference type="ChEBI" id="CHEBI:30013"/>
        <dbReference type="ChEBI" id="CHEBI:30616"/>
        <dbReference type="ChEBI" id="CHEBI:61977"/>
        <dbReference type="ChEBI" id="CHEBI:456216"/>
        <dbReference type="EC" id="2.7.11.1"/>
    </reaction>
</comment>
<comment type="subcellular location">
    <subcellularLocation>
        <location evidence="7">Membrane</location>
        <topology evidence="7">Single-pass membrane protein</topology>
    </subcellularLocation>
</comment>
<comment type="PTM">
    <text evidence="1">May be phosphorylated.</text>
</comment>
<comment type="similarity">
    <text evidence="3">Belongs to the protein kinase superfamily. Ser/Thr protein kinase family.</text>
</comment>
<comment type="sequence caution" evidence="7">
    <conflict type="erroneous initiation">
        <sequence resource="EMBL-CDS" id="CAD10806"/>
    </conflict>
</comment>
<comment type="sequence caution" evidence="7">
    <conflict type="erroneous initiation">
        <sequence resource="EMBL-CDS" id="CAD10812"/>
    </conflict>
</comment>
<comment type="sequence caution" evidence="7">
    <conflict type="erroneous initiation">
        <sequence resource="EMBL-CDS" id="CAD10813"/>
    </conflict>
</comment>